<name>COAD_STACT</name>
<gene>
    <name evidence="1" type="primary">coaD</name>
    <name type="ordered locus">Sca_0750</name>
</gene>
<sequence>MTESKAVIPGSFDPITYGHMDIIERVAQRFDEIHICVLKNSNKEGTFTVEERMALIEASVADIPNVEVHQFNGLLVDFCDEVGAKTIIRGLRAVSDFEYELRLTSMNKKLNSDVETLYMMTSTNYSFISSSVVKEVAQYKADISEFVPEPVEKALKEKFGK</sequence>
<accession>B9DPV4</accession>
<keyword id="KW-0067">ATP-binding</keyword>
<keyword id="KW-0173">Coenzyme A biosynthesis</keyword>
<keyword id="KW-0963">Cytoplasm</keyword>
<keyword id="KW-0460">Magnesium</keyword>
<keyword id="KW-0547">Nucleotide-binding</keyword>
<keyword id="KW-0548">Nucleotidyltransferase</keyword>
<keyword id="KW-1185">Reference proteome</keyword>
<keyword id="KW-0808">Transferase</keyword>
<dbReference type="EC" id="2.7.7.3" evidence="1"/>
<dbReference type="EMBL" id="AM295250">
    <property type="protein sequence ID" value="CAL27660.1"/>
    <property type="molecule type" value="Genomic_DNA"/>
</dbReference>
<dbReference type="RefSeq" id="WP_015900002.1">
    <property type="nucleotide sequence ID" value="NC_012121.1"/>
</dbReference>
<dbReference type="SMR" id="B9DPV4"/>
<dbReference type="GeneID" id="93795687"/>
<dbReference type="KEGG" id="sca:SCA_0750"/>
<dbReference type="eggNOG" id="COG0669">
    <property type="taxonomic scope" value="Bacteria"/>
</dbReference>
<dbReference type="HOGENOM" id="CLU_100149_0_1_9"/>
<dbReference type="OrthoDB" id="9806661at2"/>
<dbReference type="BioCyc" id="SCAR396513:SCA_RS03800-MONOMER"/>
<dbReference type="UniPathway" id="UPA00241">
    <property type="reaction ID" value="UER00355"/>
</dbReference>
<dbReference type="Proteomes" id="UP000000444">
    <property type="component" value="Chromosome"/>
</dbReference>
<dbReference type="GO" id="GO:0005737">
    <property type="term" value="C:cytoplasm"/>
    <property type="evidence" value="ECO:0007669"/>
    <property type="project" value="UniProtKB-SubCell"/>
</dbReference>
<dbReference type="GO" id="GO:0005524">
    <property type="term" value="F:ATP binding"/>
    <property type="evidence" value="ECO:0007669"/>
    <property type="project" value="UniProtKB-KW"/>
</dbReference>
<dbReference type="GO" id="GO:0004595">
    <property type="term" value="F:pantetheine-phosphate adenylyltransferase activity"/>
    <property type="evidence" value="ECO:0007669"/>
    <property type="project" value="UniProtKB-UniRule"/>
</dbReference>
<dbReference type="GO" id="GO:0015937">
    <property type="term" value="P:coenzyme A biosynthetic process"/>
    <property type="evidence" value="ECO:0007669"/>
    <property type="project" value="UniProtKB-UniRule"/>
</dbReference>
<dbReference type="CDD" id="cd02163">
    <property type="entry name" value="PPAT"/>
    <property type="match status" value="1"/>
</dbReference>
<dbReference type="Gene3D" id="3.40.50.620">
    <property type="entry name" value="HUPs"/>
    <property type="match status" value="1"/>
</dbReference>
<dbReference type="HAMAP" id="MF_00151">
    <property type="entry name" value="PPAT_bact"/>
    <property type="match status" value="1"/>
</dbReference>
<dbReference type="InterPro" id="IPR004821">
    <property type="entry name" value="Cyt_trans-like"/>
</dbReference>
<dbReference type="InterPro" id="IPR001980">
    <property type="entry name" value="PPAT"/>
</dbReference>
<dbReference type="InterPro" id="IPR014729">
    <property type="entry name" value="Rossmann-like_a/b/a_fold"/>
</dbReference>
<dbReference type="NCBIfam" id="TIGR01510">
    <property type="entry name" value="coaD_prev_kdtB"/>
    <property type="match status" value="1"/>
</dbReference>
<dbReference type="NCBIfam" id="TIGR00125">
    <property type="entry name" value="cyt_tran_rel"/>
    <property type="match status" value="1"/>
</dbReference>
<dbReference type="PANTHER" id="PTHR21342">
    <property type="entry name" value="PHOSPHOPANTETHEINE ADENYLYLTRANSFERASE"/>
    <property type="match status" value="1"/>
</dbReference>
<dbReference type="PANTHER" id="PTHR21342:SF1">
    <property type="entry name" value="PHOSPHOPANTETHEINE ADENYLYLTRANSFERASE"/>
    <property type="match status" value="1"/>
</dbReference>
<dbReference type="Pfam" id="PF01467">
    <property type="entry name" value="CTP_transf_like"/>
    <property type="match status" value="1"/>
</dbReference>
<dbReference type="PRINTS" id="PR01020">
    <property type="entry name" value="LPSBIOSNTHSS"/>
</dbReference>
<dbReference type="SUPFAM" id="SSF52374">
    <property type="entry name" value="Nucleotidylyl transferase"/>
    <property type="match status" value="1"/>
</dbReference>
<proteinExistence type="inferred from homology"/>
<protein>
    <recommendedName>
        <fullName evidence="1">Phosphopantetheine adenylyltransferase</fullName>
        <ecNumber evidence="1">2.7.7.3</ecNumber>
    </recommendedName>
    <alternativeName>
        <fullName evidence="1">Dephospho-CoA pyrophosphorylase</fullName>
    </alternativeName>
    <alternativeName>
        <fullName evidence="1">Pantetheine-phosphate adenylyltransferase</fullName>
        <shortName evidence="1">PPAT</shortName>
    </alternativeName>
</protein>
<evidence type="ECO:0000255" key="1">
    <source>
        <dbReference type="HAMAP-Rule" id="MF_00151"/>
    </source>
</evidence>
<comment type="function">
    <text evidence="1">Reversibly transfers an adenylyl group from ATP to 4'-phosphopantetheine, yielding dephospho-CoA (dPCoA) and pyrophosphate.</text>
</comment>
<comment type="catalytic activity">
    <reaction evidence="1">
        <text>(R)-4'-phosphopantetheine + ATP + H(+) = 3'-dephospho-CoA + diphosphate</text>
        <dbReference type="Rhea" id="RHEA:19801"/>
        <dbReference type="ChEBI" id="CHEBI:15378"/>
        <dbReference type="ChEBI" id="CHEBI:30616"/>
        <dbReference type="ChEBI" id="CHEBI:33019"/>
        <dbReference type="ChEBI" id="CHEBI:57328"/>
        <dbReference type="ChEBI" id="CHEBI:61723"/>
        <dbReference type="EC" id="2.7.7.3"/>
    </reaction>
</comment>
<comment type="cofactor">
    <cofactor evidence="1">
        <name>Mg(2+)</name>
        <dbReference type="ChEBI" id="CHEBI:18420"/>
    </cofactor>
</comment>
<comment type="pathway">
    <text evidence="1">Cofactor biosynthesis; coenzyme A biosynthesis; CoA from (R)-pantothenate: step 4/5.</text>
</comment>
<comment type="subunit">
    <text evidence="1">Homohexamer.</text>
</comment>
<comment type="subcellular location">
    <subcellularLocation>
        <location evidence="1">Cytoplasm</location>
    </subcellularLocation>
</comment>
<comment type="similarity">
    <text evidence="1">Belongs to the bacterial CoaD family.</text>
</comment>
<feature type="chain" id="PRO_1000123300" description="Phosphopantetheine adenylyltransferase">
    <location>
        <begin position="1"/>
        <end position="161"/>
    </location>
</feature>
<feature type="binding site" evidence="1">
    <location>
        <begin position="11"/>
        <end position="12"/>
    </location>
    <ligand>
        <name>ATP</name>
        <dbReference type="ChEBI" id="CHEBI:30616"/>
    </ligand>
</feature>
<feature type="binding site" evidence="1">
    <location>
        <position position="11"/>
    </location>
    <ligand>
        <name>substrate</name>
    </ligand>
</feature>
<feature type="binding site" evidence="1">
    <location>
        <position position="19"/>
    </location>
    <ligand>
        <name>ATP</name>
        <dbReference type="ChEBI" id="CHEBI:30616"/>
    </ligand>
</feature>
<feature type="binding site" evidence="1">
    <location>
        <position position="43"/>
    </location>
    <ligand>
        <name>substrate</name>
    </ligand>
</feature>
<feature type="binding site" evidence="1">
    <location>
        <position position="75"/>
    </location>
    <ligand>
        <name>substrate</name>
    </ligand>
</feature>
<feature type="binding site" evidence="1">
    <location>
        <position position="89"/>
    </location>
    <ligand>
        <name>substrate</name>
    </ligand>
</feature>
<feature type="binding site" evidence="1">
    <location>
        <begin position="90"/>
        <end position="92"/>
    </location>
    <ligand>
        <name>ATP</name>
        <dbReference type="ChEBI" id="CHEBI:30616"/>
    </ligand>
</feature>
<feature type="binding site" evidence="1">
    <location>
        <position position="100"/>
    </location>
    <ligand>
        <name>ATP</name>
        <dbReference type="ChEBI" id="CHEBI:30616"/>
    </ligand>
</feature>
<feature type="binding site" evidence="1">
    <location>
        <begin position="125"/>
        <end position="131"/>
    </location>
    <ligand>
        <name>ATP</name>
        <dbReference type="ChEBI" id="CHEBI:30616"/>
    </ligand>
</feature>
<feature type="site" description="Transition state stabilizer" evidence="1">
    <location>
        <position position="19"/>
    </location>
</feature>
<organism>
    <name type="scientific">Staphylococcus carnosus (strain TM300)</name>
    <dbReference type="NCBI Taxonomy" id="396513"/>
    <lineage>
        <taxon>Bacteria</taxon>
        <taxon>Bacillati</taxon>
        <taxon>Bacillota</taxon>
        <taxon>Bacilli</taxon>
        <taxon>Bacillales</taxon>
        <taxon>Staphylococcaceae</taxon>
        <taxon>Staphylococcus</taxon>
    </lineage>
</organism>
<reference key="1">
    <citation type="journal article" date="2009" name="Appl. Environ. Microbiol.">
        <title>Genome analysis of the meat starter culture bacterium Staphylococcus carnosus TM300.</title>
        <authorList>
            <person name="Rosenstein R."/>
            <person name="Nerz C."/>
            <person name="Biswas L."/>
            <person name="Resch A."/>
            <person name="Raddatz G."/>
            <person name="Schuster S.C."/>
            <person name="Goetz F."/>
        </authorList>
    </citation>
    <scope>NUCLEOTIDE SEQUENCE [LARGE SCALE GENOMIC DNA]</scope>
    <source>
        <strain>TM300</strain>
    </source>
</reference>